<feature type="chain" id="PRO_0000128856" description="4-hydroxy-3-methylbut-2-enyl diphosphate reductase">
    <location>
        <begin position="1"/>
        <end position="398"/>
    </location>
</feature>
<feature type="active site" description="Proton donor" evidence="1">
    <location>
        <position position="187"/>
    </location>
</feature>
<feature type="binding site" evidence="1">
    <location>
        <position position="66"/>
    </location>
    <ligand>
        <name>[4Fe-4S] cluster</name>
        <dbReference type="ChEBI" id="CHEBI:49883"/>
    </ligand>
</feature>
<feature type="binding site" evidence="1">
    <location>
        <position position="96"/>
    </location>
    <ligand>
        <name>(2E)-4-hydroxy-3-methylbut-2-enyl diphosphate</name>
        <dbReference type="ChEBI" id="CHEBI:128753"/>
    </ligand>
</feature>
<feature type="binding site" evidence="1">
    <location>
        <position position="96"/>
    </location>
    <ligand>
        <name>dimethylallyl diphosphate</name>
        <dbReference type="ChEBI" id="CHEBI:57623"/>
    </ligand>
</feature>
<feature type="binding site" evidence="1">
    <location>
        <position position="96"/>
    </location>
    <ligand>
        <name>isopentenyl diphosphate</name>
        <dbReference type="ChEBI" id="CHEBI:128769"/>
    </ligand>
</feature>
<feature type="binding site" evidence="1">
    <location>
        <position position="157"/>
    </location>
    <ligand>
        <name>[4Fe-4S] cluster</name>
        <dbReference type="ChEBI" id="CHEBI:49883"/>
    </ligand>
</feature>
<feature type="binding site" evidence="1">
    <location>
        <position position="185"/>
    </location>
    <ligand>
        <name>(2E)-4-hydroxy-3-methylbut-2-enyl diphosphate</name>
        <dbReference type="ChEBI" id="CHEBI:128753"/>
    </ligand>
</feature>
<feature type="binding site" evidence="1">
    <location>
        <position position="185"/>
    </location>
    <ligand>
        <name>dimethylallyl diphosphate</name>
        <dbReference type="ChEBI" id="CHEBI:57623"/>
    </ligand>
</feature>
<feature type="binding site" evidence="1">
    <location>
        <position position="185"/>
    </location>
    <ligand>
        <name>isopentenyl diphosphate</name>
        <dbReference type="ChEBI" id="CHEBI:128769"/>
    </ligand>
</feature>
<feature type="binding site" evidence="1">
    <location>
        <position position="250"/>
    </location>
    <ligand>
        <name>(2E)-4-hydroxy-3-methylbut-2-enyl diphosphate</name>
        <dbReference type="ChEBI" id="CHEBI:128753"/>
    </ligand>
</feature>
<feature type="binding site" evidence="1">
    <location>
        <position position="288"/>
    </location>
    <ligand>
        <name>[4Fe-4S] cluster</name>
        <dbReference type="ChEBI" id="CHEBI:49883"/>
    </ligand>
</feature>
<feature type="binding site" evidence="1">
    <location>
        <position position="317"/>
    </location>
    <ligand>
        <name>(2E)-4-hydroxy-3-methylbut-2-enyl diphosphate</name>
        <dbReference type="ChEBI" id="CHEBI:128753"/>
    </ligand>
</feature>
<feature type="binding site" evidence="1">
    <location>
        <position position="317"/>
    </location>
    <ligand>
        <name>dimethylallyl diphosphate</name>
        <dbReference type="ChEBI" id="CHEBI:57623"/>
    </ligand>
</feature>
<feature type="binding site" evidence="1">
    <location>
        <position position="317"/>
    </location>
    <ligand>
        <name>isopentenyl diphosphate</name>
        <dbReference type="ChEBI" id="CHEBI:128769"/>
    </ligand>
</feature>
<feature type="binding site" evidence="1">
    <location>
        <position position="318"/>
    </location>
    <ligand>
        <name>(2E)-4-hydroxy-3-methylbut-2-enyl diphosphate</name>
        <dbReference type="ChEBI" id="CHEBI:128753"/>
    </ligand>
</feature>
<feature type="binding site" evidence="1">
    <location>
        <position position="318"/>
    </location>
    <ligand>
        <name>dimethylallyl diphosphate</name>
        <dbReference type="ChEBI" id="CHEBI:57623"/>
    </ligand>
</feature>
<feature type="binding site" evidence="1">
    <location>
        <position position="318"/>
    </location>
    <ligand>
        <name>isopentenyl diphosphate</name>
        <dbReference type="ChEBI" id="CHEBI:128769"/>
    </ligand>
</feature>
<feature type="binding site" evidence="1">
    <location>
        <position position="319"/>
    </location>
    <ligand>
        <name>(2E)-4-hydroxy-3-methylbut-2-enyl diphosphate</name>
        <dbReference type="ChEBI" id="CHEBI:128753"/>
    </ligand>
</feature>
<feature type="binding site" evidence="1">
    <location>
        <position position="319"/>
    </location>
    <ligand>
        <name>dimethylallyl diphosphate</name>
        <dbReference type="ChEBI" id="CHEBI:57623"/>
    </ligand>
</feature>
<feature type="binding site" evidence="1">
    <location>
        <position position="319"/>
    </location>
    <ligand>
        <name>isopentenyl diphosphate</name>
        <dbReference type="ChEBI" id="CHEBI:128769"/>
    </ligand>
</feature>
<feature type="binding site" evidence="1">
    <location>
        <position position="380"/>
    </location>
    <ligand>
        <name>(2E)-4-hydroxy-3-methylbut-2-enyl diphosphate</name>
        <dbReference type="ChEBI" id="CHEBI:128753"/>
    </ligand>
</feature>
<feature type="binding site" evidence="1">
    <location>
        <position position="380"/>
    </location>
    <ligand>
        <name>dimethylallyl diphosphate</name>
        <dbReference type="ChEBI" id="CHEBI:57623"/>
    </ligand>
</feature>
<feature type="binding site" evidence="1">
    <location>
        <position position="380"/>
    </location>
    <ligand>
        <name>isopentenyl diphosphate</name>
        <dbReference type="ChEBI" id="CHEBI:128769"/>
    </ligand>
</feature>
<keyword id="KW-0004">4Fe-4S</keyword>
<keyword id="KW-0408">Iron</keyword>
<keyword id="KW-0411">Iron-sulfur</keyword>
<keyword id="KW-0414">Isoprene biosynthesis</keyword>
<keyword id="KW-0479">Metal-binding</keyword>
<keyword id="KW-0560">Oxidoreductase</keyword>
<gene>
    <name evidence="1" type="primary">ispH</name>
    <name type="synonym">lytB</name>
    <name type="ordered locus">PMM0264</name>
</gene>
<protein>
    <recommendedName>
        <fullName evidence="1">4-hydroxy-3-methylbut-2-enyl diphosphate reductase</fullName>
        <shortName evidence="1">HMBPP reductase</shortName>
        <ecNumber evidence="1">1.17.7.4</ecNumber>
    </recommendedName>
</protein>
<proteinExistence type="inferred from homology"/>
<sequence length="398" mass="45202">MDTQAFRRSLHHSDRYNRRGFDSPTKRAQALEEAYQSDLITSIRNNSFTYKKGRLNIKLAQAFGFCWGVERAVAMAYETRRHYPDENIWITNEIIHNPSVNDHLRKMNVKFISAKNGIKDFSLVSDGDVVILPAFGATVQEMKLLHEKGCHIIDTTCPWVSKVWHTVEKHKKHTFTSIIHGKFKHEETLATSSFADKYLVVLNLEEANYVSEYILGRGNKNHFLNKFAQAFSNGFDPDKDLDRVGVANQTTMLKSETEEIGKVFEKTMLHKFGPEKLNSHFLAFNTICDATEERQDAMFSLVDEDLDILVVIGGYNSSNTTHLQEIAINKNISSFHIDTPERISVKENSILHKPLKSEMVLKKNFIPDGEIKVGITSGASTPDKIVADVIEKLIAITK</sequence>
<evidence type="ECO:0000255" key="1">
    <source>
        <dbReference type="HAMAP-Rule" id="MF_00191"/>
    </source>
</evidence>
<organism>
    <name type="scientific">Prochlorococcus marinus subsp. pastoris (strain CCMP1986 / NIES-2087 / MED4)</name>
    <dbReference type="NCBI Taxonomy" id="59919"/>
    <lineage>
        <taxon>Bacteria</taxon>
        <taxon>Bacillati</taxon>
        <taxon>Cyanobacteriota</taxon>
        <taxon>Cyanophyceae</taxon>
        <taxon>Synechococcales</taxon>
        <taxon>Prochlorococcaceae</taxon>
        <taxon>Prochlorococcus</taxon>
    </lineage>
</organism>
<comment type="function">
    <text evidence="1">Catalyzes the conversion of 1-hydroxy-2-methyl-2-(E)-butenyl 4-diphosphate (HMBPP) into a mixture of isopentenyl diphosphate (IPP) and dimethylallyl diphosphate (DMAPP). Acts in the terminal step of the DOXP/MEP pathway for isoprenoid precursor biosynthesis.</text>
</comment>
<comment type="catalytic activity">
    <reaction evidence="1">
        <text>isopentenyl diphosphate + 2 oxidized [2Fe-2S]-[ferredoxin] + H2O = (2E)-4-hydroxy-3-methylbut-2-enyl diphosphate + 2 reduced [2Fe-2S]-[ferredoxin] + 2 H(+)</text>
        <dbReference type="Rhea" id="RHEA:24488"/>
        <dbReference type="Rhea" id="RHEA-COMP:10000"/>
        <dbReference type="Rhea" id="RHEA-COMP:10001"/>
        <dbReference type="ChEBI" id="CHEBI:15377"/>
        <dbReference type="ChEBI" id="CHEBI:15378"/>
        <dbReference type="ChEBI" id="CHEBI:33737"/>
        <dbReference type="ChEBI" id="CHEBI:33738"/>
        <dbReference type="ChEBI" id="CHEBI:128753"/>
        <dbReference type="ChEBI" id="CHEBI:128769"/>
        <dbReference type="EC" id="1.17.7.4"/>
    </reaction>
</comment>
<comment type="catalytic activity">
    <reaction evidence="1">
        <text>dimethylallyl diphosphate + 2 oxidized [2Fe-2S]-[ferredoxin] + H2O = (2E)-4-hydroxy-3-methylbut-2-enyl diphosphate + 2 reduced [2Fe-2S]-[ferredoxin] + 2 H(+)</text>
        <dbReference type="Rhea" id="RHEA:24825"/>
        <dbReference type="Rhea" id="RHEA-COMP:10000"/>
        <dbReference type="Rhea" id="RHEA-COMP:10001"/>
        <dbReference type="ChEBI" id="CHEBI:15377"/>
        <dbReference type="ChEBI" id="CHEBI:15378"/>
        <dbReference type="ChEBI" id="CHEBI:33737"/>
        <dbReference type="ChEBI" id="CHEBI:33738"/>
        <dbReference type="ChEBI" id="CHEBI:57623"/>
        <dbReference type="ChEBI" id="CHEBI:128753"/>
        <dbReference type="EC" id="1.17.7.4"/>
    </reaction>
</comment>
<comment type="cofactor">
    <cofactor evidence="1">
        <name>[4Fe-4S] cluster</name>
        <dbReference type="ChEBI" id="CHEBI:49883"/>
    </cofactor>
    <text evidence="1">Binds 1 [4Fe-4S] cluster per subunit.</text>
</comment>
<comment type="pathway">
    <text evidence="1">Isoprenoid biosynthesis; dimethylallyl diphosphate biosynthesis; dimethylallyl diphosphate from (2E)-4-hydroxy-3-methylbutenyl diphosphate: step 1/1.</text>
</comment>
<comment type="pathway">
    <text evidence="1">Isoprenoid biosynthesis; isopentenyl diphosphate biosynthesis via DXP pathway; isopentenyl diphosphate from 1-deoxy-D-xylulose 5-phosphate: step 6/6.</text>
</comment>
<comment type="similarity">
    <text evidence="1">Belongs to the IspH family.</text>
</comment>
<accession>Q7V329</accession>
<reference key="1">
    <citation type="journal article" date="2003" name="Nature">
        <title>Genome divergence in two Prochlorococcus ecotypes reflects oceanic niche differentiation.</title>
        <authorList>
            <person name="Rocap G."/>
            <person name="Larimer F.W."/>
            <person name="Lamerdin J.E."/>
            <person name="Malfatti S."/>
            <person name="Chain P."/>
            <person name="Ahlgren N.A."/>
            <person name="Arellano A."/>
            <person name="Coleman M."/>
            <person name="Hauser L."/>
            <person name="Hess W.R."/>
            <person name="Johnson Z.I."/>
            <person name="Land M.L."/>
            <person name="Lindell D."/>
            <person name="Post A.F."/>
            <person name="Regala W."/>
            <person name="Shah M."/>
            <person name="Shaw S.L."/>
            <person name="Steglich C."/>
            <person name="Sullivan M.B."/>
            <person name="Ting C.S."/>
            <person name="Tolonen A."/>
            <person name="Webb E.A."/>
            <person name="Zinser E.R."/>
            <person name="Chisholm S.W."/>
        </authorList>
    </citation>
    <scope>NUCLEOTIDE SEQUENCE [LARGE SCALE GENOMIC DNA]</scope>
    <source>
        <strain>CCMP1986 / NIES-2087 / MED4</strain>
    </source>
</reference>
<dbReference type="EC" id="1.17.7.4" evidence="1"/>
<dbReference type="EMBL" id="BX548174">
    <property type="protein sequence ID" value="CAE18723.1"/>
    <property type="molecule type" value="Genomic_DNA"/>
</dbReference>
<dbReference type="RefSeq" id="WP_011131901.1">
    <property type="nucleotide sequence ID" value="NC_005072.1"/>
</dbReference>
<dbReference type="SMR" id="Q7V329"/>
<dbReference type="STRING" id="59919.PMM0264"/>
<dbReference type="KEGG" id="pmm:PMM0264"/>
<dbReference type="eggNOG" id="COG0761">
    <property type="taxonomic scope" value="Bacteria"/>
</dbReference>
<dbReference type="HOGENOM" id="CLU_027486_4_0_3"/>
<dbReference type="OrthoDB" id="9804077at2"/>
<dbReference type="UniPathway" id="UPA00056">
    <property type="reaction ID" value="UER00097"/>
</dbReference>
<dbReference type="UniPathway" id="UPA00059">
    <property type="reaction ID" value="UER00105"/>
</dbReference>
<dbReference type="Proteomes" id="UP000001026">
    <property type="component" value="Chromosome"/>
</dbReference>
<dbReference type="GO" id="GO:0051539">
    <property type="term" value="F:4 iron, 4 sulfur cluster binding"/>
    <property type="evidence" value="ECO:0007669"/>
    <property type="project" value="UniProtKB-UniRule"/>
</dbReference>
<dbReference type="GO" id="GO:0051745">
    <property type="term" value="F:4-hydroxy-3-methylbut-2-enyl diphosphate reductase activity"/>
    <property type="evidence" value="ECO:0007669"/>
    <property type="project" value="UniProtKB-UniRule"/>
</dbReference>
<dbReference type="GO" id="GO:0046872">
    <property type="term" value="F:metal ion binding"/>
    <property type="evidence" value="ECO:0007669"/>
    <property type="project" value="UniProtKB-KW"/>
</dbReference>
<dbReference type="GO" id="GO:0050992">
    <property type="term" value="P:dimethylallyl diphosphate biosynthetic process"/>
    <property type="evidence" value="ECO:0007669"/>
    <property type="project" value="UniProtKB-UniRule"/>
</dbReference>
<dbReference type="GO" id="GO:0019288">
    <property type="term" value="P:isopentenyl diphosphate biosynthetic process, methylerythritol 4-phosphate pathway"/>
    <property type="evidence" value="ECO:0007669"/>
    <property type="project" value="UniProtKB-UniRule"/>
</dbReference>
<dbReference type="GO" id="GO:0016114">
    <property type="term" value="P:terpenoid biosynthetic process"/>
    <property type="evidence" value="ECO:0007669"/>
    <property type="project" value="UniProtKB-UniRule"/>
</dbReference>
<dbReference type="CDD" id="cd13944">
    <property type="entry name" value="lytB_ispH"/>
    <property type="match status" value="1"/>
</dbReference>
<dbReference type="Gene3D" id="3.40.50.11270">
    <property type="match status" value="1"/>
</dbReference>
<dbReference type="Gene3D" id="3.40.1010.20">
    <property type="entry name" value="4-hydroxy-3-methylbut-2-enyl diphosphate reductase, catalytic domain"/>
    <property type="match status" value="2"/>
</dbReference>
<dbReference type="HAMAP" id="MF_00191">
    <property type="entry name" value="IspH"/>
    <property type="match status" value="1"/>
</dbReference>
<dbReference type="InterPro" id="IPR003451">
    <property type="entry name" value="LytB/IspH"/>
</dbReference>
<dbReference type="NCBIfam" id="TIGR00216">
    <property type="entry name" value="ispH_lytB"/>
    <property type="match status" value="1"/>
</dbReference>
<dbReference type="NCBIfam" id="NF009911">
    <property type="entry name" value="PRK13371.1"/>
    <property type="match status" value="1"/>
</dbReference>
<dbReference type="PANTHER" id="PTHR31619">
    <property type="entry name" value="4-HYDROXY-3-METHYLBUT-2-ENYL DIPHOSPHATE REDUCTASE, CHLOROPLASTIC"/>
    <property type="match status" value="1"/>
</dbReference>
<dbReference type="PANTHER" id="PTHR31619:SF5">
    <property type="entry name" value="4-HYDROXY-3-METHYLBUT-2-ENYL DIPHOSPHATE REDUCTASE, CHLOROPLASTIC"/>
    <property type="match status" value="1"/>
</dbReference>
<dbReference type="Pfam" id="PF02401">
    <property type="entry name" value="LYTB"/>
    <property type="match status" value="1"/>
</dbReference>
<name>ISPH_PROMP</name>